<gene>
    <name evidence="1" type="primary">dut</name>
    <name type="ordered locus">CTL0544</name>
</gene>
<proteinExistence type="inferred from homology"/>
<keyword id="KW-0378">Hydrolase</keyword>
<keyword id="KW-0460">Magnesium</keyword>
<keyword id="KW-0479">Metal-binding</keyword>
<keyword id="KW-0546">Nucleotide metabolism</keyword>
<dbReference type="EC" id="3.6.1.23" evidence="1"/>
<dbReference type="EMBL" id="AM884176">
    <property type="protein sequence ID" value="CAP03984.1"/>
    <property type="molecule type" value="Genomic_DNA"/>
</dbReference>
<dbReference type="RefSeq" id="WP_009871640.1">
    <property type="nucleotide sequence ID" value="NC_010287.1"/>
</dbReference>
<dbReference type="RefSeq" id="YP_001654621.1">
    <property type="nucleotide sequence ID" value="NC_010287.1"/>
</dbReference>
<dbReference type="SMR" id="B0B7K8"/>
<dbReference type="KEGG" id="ctb:CTL0544"/>
<dbReference type="PATRIC" id="fig|471472.4.peg.585"/>
<dbReference type="HOGENOM" id="CLU_068508_1_2_0"/>
<dbReference type="UniPathway" id="UPA00610">
    <property type="reaction ID" value="UER00666"/>
</dbReference>
<dbReference type="Proteomes" id="UP001154402">
    <property type="component" value="Chromosome"/>
</dbReference>
<dbReference type="GO" id="GO:0004170">
    <property type="term" value="F:dUTP diphosphatase activity"/>
    <property type="evidence" value="ECO:0007669"/>
    <property type="project" value="UniProtKB-UniRule"/>
</dbReference>
<dbReference type="GO" id="GO:0000287">
    <property type="term" value="F:magnesium ion binding"/>
    <property type="evidence" value="ECO:0007669"/>
    <property type="project" value="UniProtKB-UniRule"/>
</dbReference>
<dbReference type="GO" id="GO:0006226">
    <property type="term" value="P:dUMP biosynthetic process"/>
    <property type="evidence" value="ECO:0007669"/>
    <property type="project" value="UniProtKB-UniRule"/>
</dbReference>
<dbReference type="GO" id="GO:0046081">
    <property type="term" value="P:dUTP catabolic process"/>
    <property type="evidence" value="ECO:0007669"/>
    <property type="project" value="InterPro"/>
</dbReference>
<dbReference type="CDD" id="cd07557">
    <property type="entry name" value="trimeric_dUTPase"/>
    <property type="match status" value="1"/>
</dbReference>
<dbReference type="FunFam" id="2.70.40.10:FF:000008">
    <property type="entry name" value="Deoxyuridine 5'-triphosphate nucleotidohydrolase"/>
    <property type="match status" value="1"/>
</dbReference>
<dbReference type="Gene3D" id="2.70.40.10">
    <property type="match status" value="1"/>
</dbReference>
<dbReference type="HAMAP" id="MF_00116">
    <property type="entry name" value="dUTPase_bact"/>
    <property type="match status" value="1"/>
</dbReference>
<dbReference type="InterPro" id="IPR008181">
    <property type="entry name" value="dUTPase"/>
</dbReference>
<dbReference type="InterPro" id="IPR029054">
    <property type="entry name" value="dUTPase-like"/>
</dbReference>
<dbReference type="InterPro" id="IPR036157">
    <property type="entry name" value="dUTPase-like_sf"/>
</dbReference>
<dbReference type="InterPro" id="IPR033704">
    <property type="entry name" value="dUTPase_trimeric"/>
</dbReference>
<dbReference type="NCBIfam" id="TIGR00576">
    <property type="entry name" value="dut"/>
    <property type="match status" value="1"/>
</dbReference>
<dbReference type="NCBIfam" id="NF001862">
    <property type="entry name" value="PRK00601.1"/>
    <property type="match status" value="1"/>
</dbReference>
<dbReference type="PANTHER" id="PTHR11241">
    <property type="entry name" value="DEOXYURIDINE 5'-TRIPHOSPHATE NUCLEOTIDOHYDROLASE"/>
    <property type="match status" value="1"/>
</dbReference>
<dbReference type="PANTHER" id="PTHR11241:SF0">
    <property type="entry name" value="DEOXYURIDINE 5'-TRIPHOSPHATE NUCLEOTIDOHYDROLASE"/>
    <property type="match status" value="1"/>
</dbReference>
<dbReference type="Pfam" id="PF00692">
    <property type="entry name" value="dUTPase"/>
    <property type="match status" value="1"/>
</dbReference>
<dbReference type="SUPFAM" id="SSF51283">
    <property type="entry name" value="dUTPase-like"/>
    <property type="match status" value="1"/>
</dbReference>
<organism>
    <name type="scientific">Chlamydia trachomatis serovar L2 (strain ATCC VR-902B / DSM 19102 / 434/Bu)</name>
    <dbReference type="NCBI Taxonomy" id="471472"/>
    <lineage>
        <taxon>Bacteria</taxon>
        <taxon>Pseudomonadati</taxon>
        <taxon>Chlamydiota</taxon>
        <taxon>Chlamydiia</taxon>
        <taxon>Chlamydiales</taxon>
        <taxon>Chlamydiaceae</taxon>
        <taxon>Chlamydia/Chlamydophila group</taxon>
        <taxon>Chlamydia</taxon>
    </lineage>
</organism>
<name>DUT_CHLT2</name>
<sequence>MKFFCKLESGSSLPEYATSGASGADVRANINEPIAILPGQRALIPTGISVEIPHGYEIQVRSRSGLASKYGVIVLQSPGTVDADYRGEIRVILANLGEATFIVEPGMRIAQLVVAKVEQVSFVETQEELTATARGTGGFGHTGEC</sequence>
<comment type="function">
    <text evidence="1">This enzyme is involved in nucleotide metabolism: it produces dUMP, the immediate precursor of thymidine nucleotides and it decreases the intracellular concentration of dUTP so that uracil cannot be incorporated into DNA.</text>
</comment>
<comment type="catalytic activity">
    <reaction evidence="1">
        <text>dUTP + H2O = dUMP + diphosphate + H(+)</text>
        <dbReference type="Rhea" id="RHEA:10248"/>
        <dbReference type="ChEBI" id="CHEBI:15377"/>
        <dbReference type="ChEBI" id="CHEBI:15378"/>
        <dbReference type="ChEBI" id="CHEBI:33019"/>
        <dbReference type="ChEBI" id="CHEBI:61555"/>
        <dbReference type="ChEBI" id="CHEBI:246422"/>
        <dbReference type="EC" id="3.6.1.23"/>
    </reaction>
</comment>
<comment type="cofactor">
    <cofactor evidence="1">
        <name>Mg(2+)</name>
        <dbReference type="ChEBI" id="CHEBI:18420"/>
    </cofactor>
</comment>
<comment type="pathway">
    <text evidence="1">Pyrimidine metabolism; dUMP biosynthesis; dUMP from dCTP (dUTP route): step 2/2.</text>
</comment>
<comment type="similarity">
    <text evidence="1">Belongs to the dUTPase family.</text>
</comment>
<reference key="1">
    <citation type="journal article" date="2008" name="Genome Res.">
        <title>Chlamydia trachomatis: genome sequence analysis of lymphogranuloma venereum isolates.</title>
        <authorList>
            <person name="Thomson N.R."/>
            <person name="Holden M.T.G."/>
            <person name="Carder C."/>
            <person name="Lennard N."/>
            <person name="Lockey S.J."/>
            <person name="Marsh P."/>
            <person name="Skipp P."/>
            <person name="O'Connor C.D."/>
            <person name="Goodhead I."/>
            <person name="Norbertzcak H."/>
            <person name="Harris B."/>
            <person name="Ormond D."/>
            <person name="Rance R."/>
            <person name="Quail M.A."/>
            <person name="Parkhill J."/>
            <person name="Stephens R.S."/>
            <person name="Clarke I.N."/>
        </authorList>
    </citation>
    <scope>NUCLEOTIDE SEQUENCE [LARGE SCALE GENOMIC DNA]</scope>
    <source>
        <strain>ATCC VR-902B / DSM 19102 / 434/Bu</strain>
    </source>
</reference>
<accession>B0B7K8</accession>
<protein>
    <recommendedName>
        <fullName evidence="1">Deoxyuridine 5'-triphosphate nucleotidohydrolase</fullName>
        <shortName evidence="1">dUTPase</shortName>
        <ecNumber evidence="1">3.6.1.23</ecNumber>
    </recommendedName>
    <alternativeName>
        <fullName evidence="1">dUTP pyrophosphatase</fullName>
    </alternativeName>
</protein>
<feature type="chain" id="PRO_1000094953" description="Deoxyuridine 5'-triphosphate nucleotidohydrolase">
    <location>
        <begin position="1"/>
        <end position="145"/>
    </location>
</feature>
<feature type="binding site" evidence="1">
    <location>
        <begin position="63"/>
        <end position="65"/>
    </location>
    <ligand>
        <name>substrate</name>
    </ligand>
</feature>
<feature type="binding site" evidence="1">
    <location>
        <position position="76"/>
    </location>
    <ligand>
        <name>substrate</name>
    </ligand>
</feature>
<feature type="binding site" evidence="1">
    <location>
        <begin position="80"/>
        <end position="82"/>
    </location>
    <ligand>
        <name>substrate</name>
    </ligand>
</feature>
<evidence type="ECO:0000255" key="1">
    <source>
        <dbReference type="HAMAP-Rule" id="MF_00116"/>
    </source>
</evidence>